<proteinExistence type="evidence at protein level"/>
<evidence type="ECO:0000250" key="1">
    <source>
        <dbReference type="UniProtKB" id="Q8BPU7"/>
    </source>
</evidence>
<evidence type="ECO:0000255" key="2">
    <source>
        <dbReference type="PROSITE-ProRule" id="PRU00664"/>
    </source>
</evidence>
<evidence type="ECO:0000269" key="3">
    <source>
    </source>
</evidence>
<evidence type="ECO:0000269" key="4">
    <source>
    </source>
</evidence>
<evidence type="ECO:0000269" key="5">
    <source>
    </source>
</evidence>
<evidence type="ECO:0000269" key="6">
    <source>
    </source>
</evidence>
<evidence type="ECO:0000269" key="7">
    <source>
    </source>
</evidence>
<evidence type="ECO:0000269" key="8">
    <source>
    </source>
</evidence>
<evidence type="ECO:0000303" key="9">
    <source>
    </source>
</evidence>
<evidence type="ECO:0000303" key="10">
    <source>
    </source>
</evidence>
<evidence type="ECO:0000303" key="11">
    <source>
    </source>
</evidence>
<evidence type="ECO:0000305" key="12"/>
<evidence type="ECO:0000305" key="13">
    <source>
    </source>
</evidence>
<evidence type="ECO:0000305" key="14">
    <source>
    </source>
</evidence>
<evidence type="ECO:0007744" key="15">
    <source>
    </source>
</evidence>
<evidence type="ECO:0007829" key="16">
    <source>
        <dbReference type="PDB" id="2VSZ"/>
    </source>
</evidence>
<evidence type="ECO:0007829" key="17">
    <source>
        <dbReference type="PDB" id="3A98"/>
    </source>
</evidence>
<evidence type="ECO:0007829" key="18">
    <source>
        <dbReference type="PDB" id="6JPP"/>
    </source>
</evidence>
<evidence type="ECO:0007829" key="19">
    <source>
        <dbReference type="PDB" id="7Y4A"/>
    </source>
</evidence>
<gene>
    <name type="primary">ELMO1</name>
    <name type="synonym">KIAA0281</name>
</gene>
<dbReference type="EMBL" id="AF398885">
    <property type="protein sequence ID" value="AAL14466.1"/>
    <property type="molecule type" value="mRNA"/>
</dbReference>
<dbReference type="EMBL" id="D87457">
    <property type="protein sequence ID" value="BAA13397.2"/>
    <property type="status" value="ALT_INIT"/>
    <property type="molecule type" value="mRNA"/>
</dbReference>
<dbReference type="EMBL" id="AL136787">
    <property type="protein sequence ID" value="CAB66721.1"/>
    <property type="molecule type" value="mRNA"/>
</dbReference>
<dbReference type="EMBL" id="AK126565">
    <property type="protein sequence ID" value="BAC86597.1"/>
    <property type="molecule type" value="mRNA"/>
</dbReference>
<dbReference type="EMBL" id="CH236951">
    <property type="protein sequence ID" value="EAL23979.1"/>
    <property type="molecule type" value="Genomic_DNA"/>
</dbReference>
<dbReference type="EMBL" id="CH471073">
    <property type="protein sequence ID" value="EAW94076.1"/>
    <property type="molecule type" value="Genomic_DNA"/>
</dbReference>
<dbReference type="EMBL" id="BC003051">
    <property type="protein sequence ID" value="AAH03051.1"/>
    <property type="molecule type" value="mRNA"/>
</dbReference>
<dbReference type="EMBL" id="BC064635">
    <property type="protein sequence ID" value="AAH64635.1"/>
    <property type="molecule type" value="mRNA"/>
</dbReference>
<dbReference type="EMBL" id="BC077074">
    <property type="protein sequence ID" value="AAH77074.1"/>
    <property type="molecule type" value="mRNA"/>
</dbReference>
<dbReference type="EMBL" id="BC114341">
    <property type="protein sequence ID" value="AAI14342.1"/>
    <property type="molecule type" value="mRNA"/>
</dbReference>
<dbReference type="CCDS" id="CCDS5449.1">
    <molecule id="Q92556-1"/>
</dbReference>
<dbReference type="CCDS" id="CCDS5450.1">
    <molecule id="Q92556-2"/>
</dbReference>
<dbReference type="RefSeq" id="NP_001034548.1">
    <molecule id="Q92556-2"/>
    <property type="nucleotide sequence ID" value="NM_001039459.3"/>
</dbReference>
<dbReference type="RefSeq" id="NP_001193409.1">
    <molecule id="Q92556-1"/>
    <property type="nucleotide sequence ID" value="NM_001206480.2"/>
</dbReference>
<dbReference type="RefSeq" id="NP_001193411.1">
    <molecule id="Q92556-1"/>
    <property type="nucleotide sequence ID" value="NM_001206482.2"/>
</dbReference>
<dbReference type="RefSeq" id="NP_055615.8">
    <molecule id="Q92556-1"/>
    <property type="nucleotide sequence ID" value="NM_014800.10"/>
</dbReference>
<dbReference type="RefSeq" id="NP_569709.1">
    <molecule id="Q92556-2"/>
    <property type="nucleotide sequence ID" value="NM_130442.4"/>
</dbReference>
<dbReference type="RefSeq" id="XP_005249976.1">
    <molecule id="Q92556-1"/>
    <property type="nucleotide sequence ID" value="XM_005249919.4"/>
</dbReference>
<dbReference type="RefSeq" id="XP_006715868.1">
    <molecule id="Q92556-1"/>
    <property type="nucleotide sequence ID" value="XM_006715805.2"/>
</dbReference>
<dbReference type="RefSeq" id="XP_011513956.1">
    <molecule id="Q92556-1"/>
    <property type="nucleotide sequence ID" value="XM_011515654.3"/>
</dbReference>
<dbReference type="RefSeq" id="XP_016868327.1">
    <property type="nucleotide sequence ID" value="XM_017012838.1"/>
</dbReference>
<dbReference type="RefSeq" id="XP_016868328.1">
    <molecule id="Q92556-1"/>
    <property type="nucleotide sequence ID" value="XM_017012839.2"/>
</dbReference>
<dbReference type="RefSeq" id="XP_024302776.1">
    <molecule id="Q92556-1"/>
    <property type="nucleotide sequence ID" value="XM_024447008.2"/>
</dbReference>
<dbReference type="RefSeq" id="XP_047277042.1">
    <molecule id="Q92556-1"/>
    <property type="nucleotide sequence ID" value="XM_047421086.1"/>
</dbReference>
<dbReference type="RefSeq" id="XP_047277043.1">
    <molecule id="Q92556-1"/>
    <property type="nucleotide sequence ID" value="XM_047421087.1"/>
</dbReference>
<dbReference type="RefSeq" id="XP_047277044.1">
    <molecule id="Q92556-1"/>
    <property type="nucleotide sequence ID" value="XM_047421088.1"/>
</dbReference>
<dbReference type="RefSeq" id="XP_054215399.1">
    <molecule id="Q92556-1"/>
    <property type="nucleotide sequence ID" value="XM_054359424.1"/>
</dbReference>
<dbReference type="RefSeq" id="XP_054215400.1">
    <molecule id="Q92556-1"/>
    <property type="nucleotide sequence ID" value="XM_054359425.1"/>
</dbReference>
<dbReference type="RefSeq" id="XP_054215401.1">
    <molecule id="Q92556-1"/>
    <property type="nucleotide sequence ID" value="XM_054359426.1"/>
</dbReference>
<dbReference type="RefSeq" id="XP_054215402.1">
    <molecule id="Q92556-1"/>
    <property type="nucleotide sequence ID" value="XM_054359427.1"/>
</dbReference>
<dbReference type="RefSeq" id="XP_054215403.1">
    <molecule id="Q92556-1"/>
    <property type="nucleotide sequence ID" value="XM_054359428.1"/>
</dbReference>
<dbReference type="RefSeq" id="XP_054215404.1">
    <molecule id="Q92556-1"/>
    <property type="nucleotide sequence ID" value="XM_054359429.1"/>
</dbReference>
<dbReference type="RefSeq" id="XP_054215405.1">
    <molecule id="Q92556-1"/>
    <property type="nucleotide sequence ID" value="XM_054359430.1"/>
</dbReference>
<dbReference type="RefSeq" id="XP_054215406.1">
    <molecule id="Q92556-1"/>
    <property type="nucleotide sequence ID" value="XM_054359431.1"/>
</dbReference>
<dbReference type="PDB" id="2RQR">
    <property type="method" value="NMR"/>
    <property type="chains" value="A=697-722"/>
</dbReference>
<dbReference type="PDB" id="2VSZ">
    <property type="method" value="X-ray"/>
    <property type="resolution" value="2.30 A"/>
    <property type="chains" value="A/B=532-675"/>
</dbReference>
<dbReference type="PDB" id="3A98">
    <property type="method" value="X-ray"/>
    <property type="resolution" value="2.10 A"/>
    <property type="chains" value="B/D=532-727"/>
</dbReference>
<dbReference type="PDB" id="6JPP">
    <property type="method" value="NMR"/>
    <property type="chains" value="A=1-113"/>
</dbReference>
<dbReference type="PDB" id="6TGB">
    <property type="method" value="EM"/>
    <property type="resolution" value="5.50 A"/>
    <property type="chains" value="B=1-727"/>
</dbReference>
<dbReference type="PDB" id="6TGC">
    <property type="method" value="EM"/>
    <property type="resolution" value="4.10 A"/>
    <property type="chains" value="B/E=1-727"/>
</dbReference>
<dbReference type="PDB" id="7DPA">
    <property type="method" value="EM"/>
    <property type="resolution" value="3.80 A"/>
    <property type="chains" value="C/F=1-727"/>
</dbReference>
<dbReference type="PDB" id="7Y4A">
    <property type="method" value="X-ray"/>
    <property type="resolution" value="1.60 A"/>
    <property type="chains" value="B/D/F/H=1-82"/>
</dbReference>
<dbReference type="PDB" id="8JHK">
    <property type="method" value="EM"/>
    <property type="resolution" value="4.76 A"/>
    <property type="chains" value="A=1-727"/>
</dbReference>
<dbReference type="PDB" id="8XM7">
    <property type="method" value="EM"/>
    <property type="resolution" value="4.91 A"/>
    <property type="chains" value="A=1-727"/>
</dbReference>
<dbReference type="PDB" id="8ZJ2">
    <property type="method" value="EM"/>
    <property type="resolution" value="4.66 A"/>
    <property type="chains" value="A/E=1-727"/>
</dbReference>
<dbReference type="PDB" id="8ZJI">
    <property type="method" value="EM"/>
    <property type="resolution" value="4.23 A"/>
    <property type="chains" value="A/D=1-727"/>
</dbReference>
<dbReference type="PDB" id="8ZJJ">
    <property type="method" value="EM"/>
    <property type="resolution" value="4.23 A"/>
    <property type="chains" value="A/D=1-727"/>
</dbReference>
<dbReference type="PDB" id="8ZJK">
    <property type="method" value="EM"/>
    <property type="resolution" value="4.23 A"/>
    <property type="chains" value="A/D=1-727"/>
</dbReference>
<dbReference type="PDB" id="8ZJL">
    <property type="method" value="EM"/>
    <property type="resolution" value="4.31 A"/>
    <property type="chains" value="A/D=1-727"/>
</dbReference>
<dbReference type="PDB" id="8ZJM">
    <property type="method" value="EM"/>
    <property type="resolution" value="4.52 A"/>
    <property type="chains" value="A/D=1-727"/>
</dbReference>
<dbReference type="PDBsum" id="2RQR"/>
<dbReference type="PDBsum" id="2VSZ"/>
<dbReference type="PDBsum" id="3A98"/>
<dbReference type="PDBsum" id="6JPP"/>
<dbReference type="PDBsum" id="6TGB"/>
<dbReference type="PDBsum" id="6TGC"/>
<dbReference type="PDBsum" id="7DPA"/>
<dbReference type="PDBsum" id="7Y4A"/>
<dbReference type="PDBsum" id="8JHK"/>
<dbReference type="PDBsum" id="8XM7"/>
<dbReference type="PDBsum" id="8ZJ2"/>
<dbReference type="PDBsum" id="8ZJI"/>
<dbReference type="PDBsum" id="8ZJJ"/>
<dbReference type="PDBsum" id="8ZJK"/>
<dbReference type="PDBsum" id="8ZJL"/>
<dbReference type="PDBsum" id="8ZJM"/>
<dbReference type="EMDB" id="EMD-10497"/>
<dbReference type="EMDB" id="EMD-10498"/>
<dbReference type="EMDB" id="EMD-30802"/>
<dbReference type="EMDB" id="EMD-36271"/>
<dbReference type="EMDB" id="EMD-38466"/>
<dbReference type="EMDB" id="EMD-60136"/>
<dbReference type="EMDB" id="EMD-60146"/>
<dbReference type="EMDB" id="EMD-60147"/>
<dbReference type="EMDB" id="EMD-60148"/>
<dbReference type="EMDB" id="EMD-60149"/>
<dbReference type="EMDB" id="EMD-60150"/>
<dbReference type="SMR" id="Q92556"/>
<dbReference type="BioGRID" id="115180">
    <property type="interactions" value="36"/>
</dbReference>
<dbReference type="CORUM" id="Q92556"/>
<dbReference type="DIP" id="DIP-31095N"/>
<dbReference type="FunCoup" id="Q92556">
    <property type="interactions" value="906"/>
</dbReference>
<dbReference type="IntAct" id="Q92556">
    <property type="interactions" value="29"/>
</dbReference>
<dbReference type="MINT" id="Q92556"/>
<dbReference type="STRING" id="9606.ENSP00000312185"/>
<dbReference type="GlyGen" id="Q92556">
    <property type="glycosylation" value="1 site, 1 O-linked glycan (1 site)"/>
</dbReference>
<dbReference type="iPTMnet" id="Q92556"/>
<dbReference type="MetOSite" id="Q92556"/>
<dbReference type="PhosphoSitePlus" id="Q92556"/>
<dbReference type="BioMuta" id="ELMO1"/>
<dbReference type="DMDM" id="30923321"/>
<dbReference type="CPTAC" id="CPTAC-1759"/>
<dbReference type="jPOST" id="Q92556"/>
<dbReference type="MassIVE" id="Q92556"/>
<dbReference type="PaxDb" id="9606-ENSP00000312185"/>
<dbReference type="PeptideAtlas" id="Q92556"/>
<dbReference type="ProteomicsDB" id="75312">
    <molecule id="Q92556-1"/>
</dbReference>
<dbReference type="ProteomicsDB" id="75313">
    <molecule id="Q92556-2"/>
</dbReference>
<dbReference type="ProteomicsDB" id="75314">
    <molecule id="Q92556-3"/>
</dbReference>
<dbReference type="Pumba" id="Q92556"/>
<dbReference type="Antibodypedia" id="12940">
    <property type="antibodies" value="227 antibodies from 34 providers"/>
</dbReference>
<dbReference type="DNASU" id="9844"/>
<dbReference type="Ensembl" id="ENST00000310758.9">
    <molecule id="Q92556-1"/>
    <property type="protein sequence ID" value="ENSP00000312185.4"/>
    <property type="gene ID" value="ENSG00000155849.16"/>
</dbReference>
<dbReference type="Ensembl" id="ENST00000396040.6">
    <molecule id="Q92556-2"/>
    <property type="protein sequence ID" value="ENSP00000379355.2"/>
    <property type="gene ID" value="ENSG00000155849.16"/>
</dbReference>
<dbReference type="Ensembl" id="ENST00000396045.7">
    <molecule id="Q92556-2"/>
    <property type="protein sequence ID" value="ENSP00000379360.3"/>
    <property type="gene ID" value="ENSG00000155849.16"/>
</dbReference>
<dbReference type="Ensembl" id="ENST00000442504.5">
    <molecule id="Q92556-1"/>
    <property type="protein sequence ID" value="ENSP00000406952.1"/>
    <property type="gene ID" value="ENSG00000155849.16"/>
</dbReference>
<dbReference type="Ensembl" id="ENST00000448602.5">
    <molecule id="Q92556-1"/>
    <property type="protein sequence ID" value="ENSP00000394458.1"/>
    <property type="gene ID" value="ENSG00000155849.16"/>
</dbReference>
<dbReference type="GeneID" id="9844"/>
<dbReference type="KEGG" id="hsa:9844"/>
<dbReference type="MANE-Select" id="ENST00000310758.9">
    <property type="protein sequence ID" value="ENSP00000312185.4"/>
    <property type="RefSeq nucleotide sequence ID" value="NM_014800.11"/>
    <property type="RefSeq protein sequence ID" value="NP_055615.8"/>
</dbReference>
<dbReference type="UCSC" id="uc003tfi.3">
    <molecule id="Q92556-1"/>
    <property type="organism name" value="human"/>
</dbReference>
<dbReference type="AGR" id="HGNC:16286"/>
<dbReference type="CTD" id="9844"/>
<dbReference type="DisGeNET" id="9844"/>
<dbReference type="GeneCards" id="ELMO1"/>
<dbReference type="HGNC" id="HGNC:16286">
    <property type="gene designation" value="ELMO1"/>
</dbReference>
<dbReference type="HPA" id="ENSG00000155849">
    <property type="expression patterns" value="Tissue enhanced (brain)"/>
</dbReference>
<dbReference type="MIM" id="606420">
    <property type="type" value="gene"/>
</dbReference>
<dbReference type="neXtProt" id="NX_Q92556"/>
<dbReference type="OpenTargets" id="ENSG00000155849"/>
<dbReference type="PharmGKB" id="PA27754"/>
<dbReference type="VEuPathDB" id="HostDB:ENSG00000155849"/>
<dbReference type="eggNOG" id="KOG2999">
    <property type="taxonomic scope" value="Eukaryota"/>
</dbReference>
<dbReference type="GeneTree" id="ENSGT00940000155994"/>
<dbReference type="HOGENOM" id="CLU_097960_0_0_1"/>
<dbReference type="InParanoid" id="Q92556"/>
<dbReference type="OMA" id="CPHMKDL"/>
<dbReference type="OrthoDB" id="9514336at2759"/>
<dbReference type="PAN-GO" id="Q92556">
    <property type="GO annotations" value="4 GO annotations based on evolutionary models"/>
</dbReference>
<dbReference type="PhylomeDB" id="Q92556"/>
<dbReference type="TreeFam" id="TF312966"/>
<dbReference type="PathwayCommons" id="Q92556"/>
<dbReference type="Reactome" id="R-HSA-164944">
    <property type="pathway name" value="Nef and signal transduction"/>
</dbReference>
<dbReference type="Reactome" id="R-HSA-2029482">
    <property type="pathway name" value="Regulation of actin dynamics for phagocytic cup formation"/>
</dbReference>
<dbReference type="Reactome" id="R-HSA-4420097">
    <property type="pathway name" value="VEGFA-VEGFR2 Pathway"/>
</dbReference>
<dbReference type="Reactome" id="R-HSA-8849471">
    <property type="pathway name" value="PTK6 Regulates RHO GTPases, RAS GTPase and MAP kinases"/>
</dbReference>
<dbReference type="Reactome" id="R-HSA-9664422">
    <property type="pathway name" value="FCGR3A-mediated phagocytosis"/>
</dbReference>
<dbReference type="SignaLink" id="Q92556"/>
<dbReference type="SIGNOR" id="Q92556"/>
<dbReference type="BioGRID-ORCS" id="9844">
    <property type="hits" value="14 hits in 1157 CRISPR screens"/>
</dbReference>
<dbReference type="ChiTaRS" id="ELMO1">
    <property type="organism name" value="human"/>
</dbReference>
<dbReference type="EvolutionaryTrace" id="Q92556"/>
<dbReference type="GeneWiki" id="ELMO1"/>
<dbReference type="GenomeRNAi" id="9844"/>
<dbReference type="Pharos" id="Q92556">
    <property type="development level" value="Tbio"/>
</dbReference>
<dbReference type="PRO" id="PR:Q92556"/>
<dbReference type="Proteomes" id="UP000005640">
    <property type="component" value="Chromosome 7"/>
</dbReference>
<dbReference type="RNAct" id="Q92556">
    <property type="molecule type" value="protein"/>
</dbReference>
<dbReference type="Bgee" id="ENSG00000155849">
    <property type="expression patterns" value="Expressed in prefrontal cortex and 169 other cell types or tissues"/>
</dbReference>
<dbReference type="ExpressionAtlas" id="Q92556">
    <property type="expression patterns" value="baseline and differential"/>
</dbReference>
<dbReference type="GO" id="GO:0005737">
    <property type="term" value="C:cytoplasm"/>
    <property type="evidence" value="ECO:0000314"/>
    <property type="project" value="UniProtKB"/>
</dbReference>
<dbReference type="GO" id="GO:0005829">
    <property type="term" value="C:cytosol"/>
    <property type="evidence" value="ECO:0000304"/>
    <property type="project" value="Reactome"/>
</dbReference>
<dbReference type="GO" id="GO:0098978">
    <property type="term" value="C:glutamatergic synapse"/>
    <property type="evidence" value="ECO:0007669"/>
    <property type="project" value="Ensembl"/>
</dbReference>
<dbReference type="GO" id="GO:0032045">
    <property type="term" value="C:guanyl-nucleotide exchange factor complex"/>
    <property type="evidence" value="ECO:0000314"/>
    <property type="project" value="WormBase"/>
</dbReference>
<dbReference type="GO" id="GO:0016020">
    <property type="term" value="C:membrane"/>
    <property type="evidence" value="ECO:0007005"/>
    <property type="project" value="UniProtKB"/>
</dbReference>
<dbReference type="GO" id="GO:0005886">
    <property type="term" value="C:plasma membrane"/>
    <property type="evidence" value="ECO:0000314"/>
    <property type="project" value="UniProtKB"/>
</dbReference>
<dbReference type="GO" id="GO:0098794">
    <property type="term" value="C:postsynapse"/>
    <property type="evidence" value="ECO:0007669"/>
    <property type="project" value="Ensembl"/>
</dbReference>
<dbReference type="GO" id="GO:0017124">
    <property type="term" value="F:SH3 domain binding"/>
    <property type="evidence" value="ECO:0000353"/>
    <property type="project" value="UniProtKB"/>
</dbReference>
<dbReference type="GO" id="GO:0030036">
    <property type="term" value="P:actin cytoskeleton organization"/>
    <property type="evidence" value="ECO:0000316"/>
    <property type="project" value="UniProtKB"/>
</dbReference>
<dbReference type="GO" id="GO:0007015">
    <property type="term" value="P:actin filament organization"/>
    <property type="evidence" value="ECO:0000318"/>
    <property type="project" value="GO_Central"/>
</dbReference>
<dbReference type="GO" id="GO:0006915">
    <property type="term" value="P:apoptotic process"/>
    <property type="evidence" value="ECO:0000303"/>
    <property type="project" value="UniProtKB"/>
</dbReference>
<dbReference type="GO" id="GO:0048870">
    <property type="term" value="P:cell motility"/>
    <property type="evidence" value="ECO:0000316"/>
    <property type="project" value="UniProtKB"/>
</dbReference>
<dbReference type="GO" id="GO:0006911">
    <property type="term" value="P:phagocytosis, engulfment"/>
    <property type="evidence" value="ECO:0000316"/>
    <property type="project" value="UniProtKB"/>
</dbReference>
<dbReference type="GO" id="GO:0016601">
    <property type="term" value="P:Rac protein signal transduction"/>
    <property type="evidence" value="ECO:0000316"/>
    <property type="project" value="UniProtKB"/>
</dbReference>
<dbReference type="GO" id="GO:0150052">
    <property type="term" value="P:regulation of postsynapse assembly"/>
    <property type="evidence" value="ECO:0007669"/>
    <property type="project" value="Ensembl"/>
</dbReference>
<dbReference type="CDD" id="cd13359">
    <property type="entry name" value="PH_ELMO1_CED-12"/>
    <property type="match status" value="1"/>
</dbReference>
<dbReference type="FunFam" id="1.25.10.10:FF:000049">
    <property type="entry name" value="Engulfment and cell motility 1 (Ced-12 homolog)"/>
    <property type="match status" value="1"/>
</dbReference>
<dbReference type="FunFam" id="2.30.29.30:FF:000053">
    <property type="entry name" value="Engulfment and cell motility protein 1"/>
    <property type="match status" value="1"/>
</dbReference>
<dbReference type="Gene3D" id="6.10.250.810">
    <property type="match status" value="1"/>
</dbReference>
<dbReference type="Gene3D" id="1.25.10.10">
    <property type="entry name" value="Leucine-rich Repeat Variant"/>
    <property type="match status" value="1"/>
</dbReference>
<dbReference type="Gene3D" id="2.30.29.30">
    <property type="entry name" value="Pleckstrin-homology domain (PH domain)/Phosphotyrosine-binding domain (PTB)"/>
    <property type="match status" value="1"/>
</dbReference>
<dbReference type="Gene3D" id="2.30.30.40">
    <property type="entry name" value="SH3 Domains"/>
    <property type="match status" value="1"/>
</dbReference>
<dbReference type="InterPro" id="IPR011989">
    <property type="entry name" value="ARM-like"/>
</dbReference>
<dbReference type="InterPro" id="IPR016024">
    <property type="entry name" value="ARM-type_fold"/>
</dbReference>
<dbReference type="InterPro" id="IPR024574">
    <property type="entry name" value="ELMO_ARM"/>
</dbReference>
<dbReference type="InterPro" id="IPR006816">
    <property type="entry name" value="ELMO_dom"/>
</dbReference>
<dbReference type="InterPro" id="IPR050868">
    <property type="entry name" value="ELMO_domain-containing"/>
</dbReference>
<dbReference type="InterPro" id="IPR011993">
    <property type="entry name" value="PH-like_dom_sf"/>
</dbReference>
<dbReference type="InterPro" id="IPR001849">
    <property type="entry name" value="PH_domain"/>
</dbReference>
<dbReference type="PANTHER" id="PTHR12771">
    <property type="entry name" value="ENGULFMENT AND CELL MOTILITY"/>
    <property type="match status" value="1"/>
</dbReference>
<dbReference type="PANTHER" id="PTHR12771:SF23">
    <property type="entry name" value="ENGULFMENT AND CELL MOTILITY PROTEIN 1"/>
    <property type="match status" value="1"/>
</dbReference>
<dbReference type="Pfam" id="PF11841">
    <property type="entry name" value="ELMO_ARM"/>
    <property type="match status" value="1"/>
</dbReference>
<dbReference type="Pfam" id="PF04727">
    <property type="entry name" value="ELMO_CED12"/>
    <property type="match status" value="1"/>
</dbReference>
<dbReference type="Pfam" id="PF16457">
    <property type="entry name" value="PH_12"/>
    <property type="match status" value="1"/>
</dbReference>
<dbReference type="SUPFAM" id="SSF48371">
    <property type="entry name" value="ARM repeat"/>
    <property type="match status" value="1"/>
</dbReference>
<dbReference type="SUPFAM" id="SSF50729">
    <property type="entry name" value="PH domain-like"/>
    <property type="match status" value="1"/>
</dbReference>
<dbReference type="PROSITE" id="PS51335">
    <property type="entry name" value="ELMO"/>
    <property type="match status" value="1"/>
</dbReference>
<feature type="chain" id="PRO_0000153712" description="Engulfment and cell motility protein 1">
    <location>
        <begin position="1"/>
        <end position="727"/>
    </location>
</feature>
<feature type="domain" description="ELMO" evidence="2">
    <location>
        <begin position="319"/>
        <end position="492"/>
    </location>
</feature>
<feature type="domain" description="PH">
    <location>
        <begin position="555"/>
        <end position="676"/>
    </location>
</feature>
<feature type="short sequence motif" description="SH3-binding">
    <location>
        <begin position="707"/>
        <end position="714"/>
    </location>
</feature>
<feature type="modified residue" description="Phosphotyrosine; by HCK" evidence="5">
    <location>
        <position position="18"/>
    </location>
</feature>
<feature type="modified residue" description="N6-acetyllysine" evidence="15">
    <location>
        <position position="100"/>
    </location>
</feature>
<feature type="modified residue" description="N6-acetyllysine" evidence="15">
    <location>
        <position position="105"/>
    </location>
</feature>
<feature type="modified residue" description="Phosphotyrosine; by HCK" evidence="5">
    <location>
        <position position="216"/>
    </location>
</feature>
<feature type="modified residue" description="Phosphoserine" evidence="1">
    <location>
        <position position="344"/>
    </location>
</feature>
<feature type="modified residue" description="Phosphotyrosine; by HCK" evidence="5">
    <location>
        <position position="395"/>
    </location>
</feature>
<feature type="modified residue" description="Phosphotyrosine; by HCK" evidence="5">
    <location>
        <position position="511"/>
    </location>
</feature>
<feature type="modified residue" description="Phosphotyrosine; by HCK" evidence="5">
    <location>
        <position position="720"/>
    </location>
</feature>
<feature type="splice variant" id="VSP_007480" description="In isoform 2." evidence="10 11">
    <location>
        <begin position="1"/>
        <end position="480"/>
    </location>
</feature>
<feature type="splice variant" id="VSP_038550" description="In isoform 3." evidence="9">
    <location>
        <begin position="1"/>
        <end position="298"/>
    </location>
</feature>
<feature type="splice variant" id="VSP_038551" description="In isoform 3." evidence="9">
    <original>VLTFNLLEDRMMTKMDPQDQAQRDIIFELRRIAFDAESEPNNSSGSMEKRKSMYTRDYKKLGFI</original>
    <variation>MSEHQKEQTLDTPSLRTVTLTVRVHGFILEVSKTKNPPIPDTFWPPRWDHRPSPGGETNAYCQM</variation>
    <location>
        <begin position="299"/>
        <end position="362"/>
    </location>
</feature>
<feature type="sequence variant" id="VAR_065824" evidence="7">
    <original>I</original>
    <variation>S</variation>
    <location>
        <position position="362"/>
    </location>
</feature>
<feature type="sequence conflict" description="In Ref. 3; CAB66721." evidence="12" ref="3">
    <original>E</original>
    <variation>A</variation>
    <location>
        <position position="716"/>
    </location>
</feature>
<feature type="strand" evidence="19">
    <location>
        <begin position="6"/>
        <end position="13"/>
    </location>
</feature>
<feature type="strand" evidence="19">
    <location>
        <begin position="20"/>
        <end position="25"/>
    </location>
</feature>
<feature type="helix" evidence="19">
    <location>
        <begin position="30"/>
        <end position="40"/>
    </location>
</feature>
<feature type="helix" evidence="19">
    <location>
        <begin position="46"/>
        <end position="48"/>
    </location>
</feature>
<feature type="strand" evidence="19">
    <location>
        <begin position="49"/>
        <end position="55"/>
    </location>
</feature>
<feature type="turn" evidence="19">
    <location>
        <begin position="63"/>
        <end position="65"/>
    </location>
</feature>
<feature type="helix" evidence="19">
    <location>
        <begin position="66"/>
        <end position="68"/>
    </location>
</feature>
<feature type="strand" evidence="19">
    <location>
        <begin position="73"/>
        <end position="79"/>
    </location>
</feature>
<feature type="helix" evidence="18">
    <location>
        <begin position="92"/>
        <end position="95"/>
    </location>
</feature>
<feature type="helix" evidence="17">
    <location>
        <begin position="532"/>
        <end position="558"/>
    </location>
</feature>
<feature type="strand" evidence="17">
    <location>
        <begin position="560"/>
        <end position="563"/>
    </location>
</feature>
<feature type="strand" evidence="16">
    <location>
        <begin position="569"/>
        <end position="571"/>
    </location>
</feature>
<feature type="strand" evidence="17">
    <location>
        <begin position="573"/>
        <end position="579"/>
    </location>
</feature>
<feature type="strand" evidence="17">
    <location>
        <begin position="583"/>
        <end position="590"/>
    </location>
</feature>
<feature type="strand" evidence="17">
    <location>
        <begin position="607"/>
        <end position="609"/>
    </location>
</feature>
<feature type="helix" evidence="17">
    <location>
        <begin position="610"/>
        <end position="612"/>
    </location>
</feature>
<feature type="strand" evidence="17">
    <location>
        <begin position="613"/>
        <end position="618"/>
    </location>
</feature>
<feature type="helix" evidence="17">
    <location>
        <begin position="619"/>
        <end position="621"/>
    </location>
</feature>
<feature type="helix" evidence="16">
    <location>
        <begin position="623"/>
        <end position="625"/>
    </location>
</feature>
<feature type="helix" evidence="17">
    <location>
        <begin position="638"/>
        <end position="640"/>
    </location>
</feature>
<feature type="strand" evidence="17">
    <location>
        <begin position="641"/>
        <end position="646"/>
    </location>
</feature>
<feature type="turn" evidence="17">
    <location>
        <begin position="647"/>
        <end position="649"/>
    </location>
</feature>
<feature type="strand" evidence="17">
    <location>
        <begin position="650"/>
        <end position="655"/>
    </location>
</feature>
<feature type="helix" evidence="17">
    <location>
        <begin position="659"/>
        <end position="672"/>
    </location>
</feature>
<feature type="helix" evidence="17">
    <location>
        <begin position="680"/>
        <end position="697"/>
    </location>
</feature>
<feature type="helix" evidence="17">
    <location>
        <begin position="699"/>
        <end position="701"/>
    </location>
</feature>
<comment type="function">
    <text evidence="3 4">Involved in cytoskeletal rearrangements required for phagocytosis of apoptotic cells and cell motility. Acts in association with DOCK1 and CRK. Was initially proposed to be required in complex with DOCK1 to activate Rac Rho small GTPases. May enhance the guanine nucleotide exchange factor (GEF) activity of DOCK1.</text>
</comment>
<comment type="subunit">
    <text evidence="1 3 4 5 6 8">Interacts with ADGRB1 (By similarity). Interacts directly with the SH3-domain of DOCK1 via its SH3-binding site. Part of a complex with DOCK1 and RAC1. Part of a complex with DOCK1 and CRK isoform CRK-II. Interacts with PLEKHG6. Interacts with HCK (via SH3 domain). Interacts with ADGRB3 (PubMed:24567399). Interacts with DOCK5 (By similarity).</text>
</comment>
<comment type="interaction">
    <interactant intactId="EBI-346417">
        <id>Q92556</id>
    </interactant>
    <interactant intactId="EBI-352622">
        <id>P07355</id>
        <label>ANXA2</label>
    </interactant>
    <organismsDiffer>false</organismsDiffer>
    <experiments>3</experiments>
</comment>
<comment type="interaction">
    <interactant intactId="EBI-346417">
        <id>Q92556</id>
    </interactant>
    <interactant intactId="EBI-446740">
        <id>Q14185</id>
        <label>DOCK1</label>
    </interactant>
    <organismsDiffer>false</organismsDiffer>
    <experiments>20</experiments>
</comment>
<comment type="interaction">
    <interactant intactId="EBI-346417">
        <id>Q92556</id>
    </interactant>
    <interactant intactId="EBI-346340">
        <id>P08631</id>
        <label>HCK</label>
    </interactant>
    <organismsDiffer>false</organismsDiffer>
    <experiments>4</experiments>
</comment>
<comment type="interaction">
    <interactant intactId="EBI-346417">
        <id>Q92556</id>
    </interactant>
    <interactant intactId="EBI-446579">
        <id>P84095</id>
        <label>RHOG</label>
    </interactant>
    <organismsDiffer>false</organismsDiffer>
    <experiments>4</experiments>
</comment>
<comment type="interaction">
    <interactant intactId="EBI-346417">
        <id>Q92556</id>
    </interactant>
    <interactant intactId="EBI-2130429">
        <id>Q9BYV2</id>
        <label>TRIM54</label>
    </interactant>
    <organismsDiffer>false</organismsDiffer>
    <experiments>3</experiments>
</comment>
<comment type="interaction">
    <interactant intactId="EBI-346417">
        <id>Q92556</id>
    </interactant>
    <interactant intactId="EBI-8643207">
        <id>Q8TD17</id>
        <label>ZNF398</label>
    </interactant>
    <organismsDiffer>false</organismsDiffer>
    <experiments>6</experiments>
</comment>
<comment type="interaction">
    <interactant intactId="EBI-15668002">
        <id>Q92556-1</id>
    </interactant>
    <interactant intactId="EBI-1995178">
        <id>O14514</id>
        <label>ADGRB1</label>
    </interactant>
    <organismsDiffer>false</organismsDiffer>
    <experiments>2</experiments>
</comment>
<comment type="interaction">
    <interactant intactId="EBI-15668002">
        <id>Q92556-1</id>
    </interactant>
    <interactant intactId="EBI-911280">
        <id>Q3UHD1</id>
        <label>Adgrb1</label>
    </interactant>
    <organismsDiffer>true</organismsDiffer>
    <experiments>9</experiments>
</comment>
<comment type="subcellular location">
    <subcellularLocation>
        <location>Cytoplasm</location>
    </subcellularLocation>
    <subcellularLocation>
        <location>Cell membrane</location>
    </subcellularLocation>
    <text>Translocation to plasma membrane seems to be mediated by DOCK1 and CRK.</text>
</comment>
<comment type="alternative products">
    <event type="alternative splicing"/>
    <isoform>
        <id>Q92556-1</id>
        <name>1</name>
        <sequence type="displayed"/>
    </isoform>
    <isoform>
        <id>Q92556-2</id>
        <name>2</name>
        <sequence type="described" ref="VSP_007480"/>
    </isoform>
    <isoform>
        <id>Q92556-3</id>
        <name>3</name>
        <sequence type="described" ref="VSP_038550 VSP_038551"/>
    </isoform>
</comment>
<comment type="tissue specificity">
    <text>Widely expressed, with a higher expression in the spleen and placenta.</text>
</comment>
<comment type="PTM">
    <text evidence="13 14">Phosphorylated by HCK.</text>
</comment>
<comment type="sequence caution" evidence="12">
    <conflict type="erroneous initiation">
        <sequence resource="EMBL-CDS" id="BAA13397"/>
    </conflict>
</comment>
<name>ELMO1_HUMAN</name>
<keyword id="KW-0002">3D-structure</keyword>
<keyword id="KW-0007">Acetylation</keyword>
<keyword id="KW-0025">Alternative splicing</keyword>
<keyword id="KW-0053">Apoptosis</keyword>
<keyword id="KW-1003">Cell membrane</keyword>
<keyword id="KW-0963">Cytoplasm</keyword>
<keyword id="KW-0472">Membrane</keyword>
<keyword id="KW-0581">Phagocytosis</keyword>
<keyword id="KW-0597">Phosphoprotein</keyword>
<keyword id="KW-1267">Proteomics identification</keyword>
<keyword id="KW-1185">Reference proteome</keyword>
<keyword id="KW-0729">SH3-binding</keyword>
<organism>
    <name type="scientific">Homo sapiens</name>
    <name type="common">Human</name>
    <dbReference type="NCBI Taxonomy" id="9606"/>
    <lineage>
        <taxon>Eukaryota</taxon>
        <taxon>Metazoa</taxon>
        <taxon>Chordata</taxon>
        <taxon>Craniata</taxon>
        <taxon>Vertebrata</taxon>
        <taxon>Euteleostomi</taxon>
        <taxon>Mammalia</taxon>
        <taxon>Eutheria</taxon>
        <taxon>Euarchontoglires</taxon>
        <taxon>Primates</taxon>
        <taxon>Haplorrhini</taxon>
        <taxon>Catarrhini</taxon>
        <taxon>Hominidae</taxon>
        <taxon>Homo</taxon>
    </lineage>
</organism>
<sequence>MPPPADIVKVAIEWPGAYPKLMEIDQKKPLSAIIKEVCDGWSLANHEYFALQHADSSNFYITEKNRNEIKNGTILRLTTSPAQNAQQLHERIQSSSMDAKLEALKDLASLSRDVTFAQEFINLDGISLLTQMVESGTERYQKLQKIMKPCFGDMLSFTLTAFVELMDHGIVSWDTFSVAFIKKIASFVNKSAIDISILQRSLAILESMVLNSHDLYQKVAQEITIGQLIPHLQGSDQEIQTYTIAVINALFLKAPDERRQEMANILAQKQLRSIILTHVIRAQRAINNEMAHQLYVLQVLTFNLLEDRMMTKMDPQDQAQRDIIFELRRIAFDAESEPNNSSGSMEKRKSMYTRDYKKLGFINHVNPAMDFTQTPPGMLALDNMLYFAKHHQDAYIRIVLENSSREDKHECPFGRSSIELTKMLCEILKVGELPSETCNDFHPMFFTHDRSFEEFFCICIQLLNKTWKEMRATSEDFNKVMQVVKEQVMRALTTKPSSLDQFKSKLQNLSYTEILKIRQSERMNQEDFQSRPILELKEKIQPEILELIKQQRLNRLVEGTCFRKLNARRRQDKFWYCRLSPNHKVLHYGDLEESPQGEVPHDSLQDKLPVADIKAVVTGKDCPHMKEKGALKQNKEVLELAFSILYDSNCQLNFIAPDKHEYCIWTDGLNALLGKDMMSDLTRNDLDTLLSMEIKLRLLDLENIQIPDAPPPIPKEPSNYDFVYDCN</sequence>
<reference key="1">
    <citation type="journal article" date="2001" name="Cell">
        <title>CED-12/ELMO, a novel member of the CrkII/Dock180/Rac pathway, is required for phagocytosis and cell migration.</title>
        <authorList>
            <person name="Gumienny T.L."/>
            <person name="Brugnera E."/>
            <person name="Tosello-Trampont A.-C."/>
            <person name="Kinchen J.M."/>
            <person name="Haney L.B."/>
            <person name="Nishiwaki K."/>
            <person name="Walk S.F."/>
            <person name="Nemergut M.E."/>
            <person name="Macara I.G."/>
            <person name="Francis R."/>
            <person name="Schedl T."/>
            <person name="Qin Y."/>
            <person name="Van Aelst L."/>
            <person name="Hengartner M.O."/>
            <person name="Ravichandran K.S."/>
        </authorList>
    </citation>
    <scope>NUCLEOTIDE SEQUENCE [MRNA] (ISOFORM 1)</scope>
    <scope>FUNCTION</scope>
    <scope>INTERACTION WITH DOCK1</scope>
    <scope>SUBUNIT OF A COMPLEX WITH DOCK1 AND CRK</scope>
</reference>
<reference key="2">
    <citation type="journal article" date="1997" name="DNA Res.">
        <title>Construction and characterization of human brain cDNA libraries suitable for analysis of cDNA clones encoding relatively large proteins.</title>
        <authorList>
            <person name="Ohara O."/>
            <person name="Nagase T."/>
            <person name="Ishikawa K."/>
            <person name="Nakajima D."/>
            <person name="Ohira M."/>
            <person name="Seki N."/>
            <person name="Nomura N."/>
        </authorList>
    </citation>
    <scope>NUCLEOTIDE SEQUENCE [LARGE SCALE MRNA] (ISOFORM 2)</scope>
    <source>
        <tissue>Brain</tissue>
    </source>
</reference>
<reference key="3">
    <citation type="journal article" date="2001" name="Genome Res.">
        <title>Towards a catalog of human genes and proteins: sequencing and analysis of 500 novel complete protein coding human cDNAs.</title>
        <authorList>
            <person name="Wiemann S."/>
            <person name="Weil B."/>
            <person name="Wellenreuther R."/>
            <person name="Gassenhuber J."/>
            <person name="Glassl S."/>
            <person name="Ansorge W."/>
            <person name="Boecher M."/>
            <person name="Bloecker H."/>
            <person name="Bauersachs S."/>
            <person name="Blum H."/>
            <person name="Lauber J."/>
            <person name="Duesterhoeft A."/>
            <person name="Beyer A."/>
            <person name="Koehrer K."/>
            <person name="Strack N."/>
            <person name="Mewes H.-W."/>
            <person name="Ottenwaelder B."/>
            <person name="Obermaier B."/>
            <person name="Tampe J."/>
            <person name="Heubner D."/>
            <person name="Wambutt R."/>
            <person name="Korn B."/>
            <person name="Klein M."/>
            <person name="Poustka A."/>
        </authorList>
    </citation>
    <scope>NUCLEOTIDE SEQUENCE [LARGE SCALE MRNA] (ISOFORM 1)</scope>
    <source>
        <tissue>Testis</tissue>
    </source>
</reference>
<reference key="4">
    <citation type="journal article" date="2004" name="Nat. Genet.">
        <title>Complete sequencing and characterization of 21,243 full-length human cDNAs.</title>
        <authorList>
            <person name="Ota T."/>
            <person name="Suzuki Y."/>
            <person name="Nishikawa T."/>
            <person name="Otsuki T."/>
            <person name="Sugiyama T."/>
            <person name="Irie R."/>
            <person name="Wakamatsu A."/>
            <person name="Hayashi K."/>
            <person name="Sato H."/>
            <person name="Nagai K."/>
            <person name="Kimura K."/>
            <person name="Makita H."/>
            <person name="Sekine M."/>
            <person name="Obayashi M."/>
            <person name="Nishi T."/>
            <person name="Shibahara T."/>
            <person name="Tanaka T."/>
            <person name="Ishii S."/>
            <person name="Yamamoto J."/>
            <person name="Saito K."/>
            <person name="Kawai Y."/>
            <person name="Isono Y."/>
            <person name="Nakamura Y."/>
            <person name="Nagahari K."/>
            <person name="Murakami K."/>
            <person name="Yasuda T."/>
            <person name="Iwayanagi T."/>
            <person name="Wagatsuma M."/>
            <person name="Shiratori A."/>
            <person name="Sudo H."/>
            <person name="Hosoiri T."/>
            <person name="Kaku Y."/>
            <person name="Kodaira H."/>
            <person name="Kondo H."/>
            <person name="Sugawara M."/>
            <person name="Takahashi M."/>
            <person name="Kanda K."/>
            <person name="Yokoi T."/>
            <person name="Furuya T."/>
            <person name="Kikkawa E."/>
            <person name="Omura Y."/>
            <person name="Abe K."/>
            <person name="Kamihara K."/>
            <person name="Katsuta N."/>
            <person name="Sato K."/>
            <person name="Tanikawa M."/>
            <person name="Yamazaki M."/>
            <person name="Ninomiya K."/>
            <person name="Ishibashi T."/>
            <person name="Yamashita H."/>
            <person name="Murakawa K."/>
            <person name="Fujimori K."/>
            <person name="Tanai H."/>
            <person name="Kimata M."/>
            <person name="Watanabe M."/>
            <person name="Hiraoka S."/>
            <person name="Chiba Y."/>
            <person name="Ishida S."/>
            <person name="Ono Y."/>
            <person name="Takiguchi S."/>
            <person name="Watanabe S."/>
            <person name="Yosida M."/>
            <person name="Hotuta T."/>
            <person name="Kusano J."/>
            <person name="Kanehori K."/>
            <person name="Takahashi-Fujii A."/>
            <person name="Hara H."/>
            <person name="Tanase T.-O."/>
            <person name="Nomura Y."/>
            <person name="Togiya S."/>
            <person name="Komai F."/>
            <person name="Hara R."/>
            <person name="Takeuchi K."/>
            <person name="Arita M."/>
            <person name="Imose N."/>
            <person name="Musashino K."/>
            <person name="Yuuki H."/>
            <person name="Oshima A."/>
            <person name="Sasaki N."/>
            <person name="Aotsuka S."/>
            <person name="Yoshikawa Y."/>
            <person name="Matsunawa H."/>
            <person name="Ichihara T."/>
            <person name="Shiohata N."/>
            <person name="Sano S."/>
            <person name="Moriya S."/>
            <person name="Momiyama H."/>
            <person name="Satoh N."/>
            <person name="Takami S."/>
            <person name="Terashima Y."/>
            <person name="Suzuki O."/>
            <person name="Nakagawa S."/>
            <person name="Senoh A."/>
            <person name="Mizoguchi H."/>
            <person name="Goto Y."/>
            <person name="Shimizu F."/>
            <person name="Wakebe H."/>
            <person name="Hishigaki H."/>
            <person name="Watanabe T."/>
            <person name="Sugiyama A."/>
            <person name="Takemoto M."/>
            <person name="Kawakami B."/>
            <person name="Yamazaki M."/>
            <person name="Watanabe K."/>
            <person name="Kumagai A."/>
            <person name="Itakura S."/>
            <person name="Fukuzumi Y."/>
            <person name="Fujimori Y."/>
            <person name="Komiyama M."/>
            <person name="Tashiro H."/>
            <person name="Tanigami A."/>
            <person name="Fujiwara T."/>
            <person name="Ono T."/>
            <person name="Yamada K."/>
            <person name="Fujii Y."/>
            <person name="Ozaki K."/>
            <person name="Hirao M."/>
            <person name="Ohmori Y."/>
            <person name="Kawabata A."/>
            <person name="Hikiji T."/>
            <person name="Kobatake N."/>
            <person name="Inagaki H."/>
            <person name="Ikema Y."/>
            <person name="Okamoto S."/>
            <person name="Okitani R."/>
            <person name="Kawakami T."/>
            <person name="Noguchi S."/>
            <person name="Itoh T."/>
            <person name="Shigeta K."/>
            <person name="Senba T."/>
            <person name="Matsumura K."/>
            <person name="Nakajima Y."/>
            <person name="Mizuno T."/>
            <person name="Morinaga M."/>
            <person name="Sasaki M."/>
            <person name="Togashi T."/>
            <person name="Oyama M."/>
            <person name="Hata H."/>
            <person name="Watanabe M."/>
            <person name="Komatsu T."/>
            <person name="Mizushima-Sugano J."/>
            <person name="Satoh T."/>
            <person name="Shirai Y."/>
            <person name="Takahashi Y."/>
            <person name="Nakagawa K."/>
            <person name="Okumura K."/>
            <person name="Nagase T."/>
            <person name="Nomura N."/>
            <person name="Kikuchi H."/>
            <person name="Masuho Y."/>
            <person name="Yamashita R."/>
            <person name="Nakai K."/>
            <person name="Yada T."/>
            <person name="Nakamura Y."/>
            <person name="Ohara O."/>
            <person name="Isogai T."/>
            <person name="Sugano S."/>
        </authorList>
    </citation>
    <scope>NUCLEOTIDE SEQUENCE [LARGE SCALE MRNA] (ISOFORM 3)</scope>
    <source>
        <tissue>Urinary bladder</tissue>
    </source>
</reference>
<reference key="5">
    <citation type="submission" date="2005-07" db="EMBL/GenBank/DDBJ databases">
        <authorList>
            <person name="Mural R.J."/>
            <person name="Istrail S."/>
            <person name="Sutton G.G."/>
            <person name="Florea L."/>
            <person name="Halpern A.L."/>
            <person name="Mobarry C.M."/>
            <person name="Lippert R."/>
            <person name="Walenz B."/>
            <person name="Shatkay H."/>
            <person name="Dew I."/>
            <person name="Miller J.R."/>
            <person name="Flanigan M.J."/>
            <person name="Edwards N.J."/>
            <person name="Bolanos R."/>
            <person name="Fasulo D."/>
            <person name="Halldorsson B.V."/>
            <person name="Hannenhalli S."/>
            <person name="Turner R."/>
            <person name="Yooseph S."/>
            <person name="Lu F."/>
            <person name="Nusskern D.R."/>
            <person name="Shue B.C."/>
            <person name="Zheng X.H."/>
            <person name="Zhong F."/>
            <person name="Delcher A.L."/>
            <person name="Huson D.H."/>
            <person name="Kravitz S.A."/>
            <person name="Mouchard L."/>
            <person name="Reinert K."/>
            <person name="Remington K.A."/>
            <person name="Clark A.G."/>
            <person name="Waterman M.S."/>
            <person name="Eichler E.E."/>
            <person name="Adams M.D."/>
            <person name="Hunkapiller M.W."/>
            <person name="Myers E.W."/>
            <person name="Venter J.C."/>
        </authorList>
    </citation>
    <scope>NUCLEOTIDE SEQUENCE [LARGE SCALE GENOMIC DNA]</scope>
</reference>
<reference key="6">
    <citation type="journal article" date="2003" name="Science">
        <title>Human chromosome 7: DNA sequence and biology.</title>
        <authorList>
            <person name="Scherer S.W."/>
            <person name="Cheung J."/>
            <person name="MacDonald J.R."/>
            <person name="Osborne L.R."/>
            <person name="Nakabayashi K."/>
            <person name="Herbrick J.-A."/>
            <person name="Carson A.R."/>
            <person name="Parker-Katiraee L."/>
            <person name="Skaug J."/>
            <person name="Khaja R."/>
            <person name="Zhang J."/>
            <person name="Hudek A.K."/>
            <person name="Li M."/>
            <person name="Haddad M."/>
            <person name="Duggan G.E."/>
            <person name="Fernandez B.A."/>
            <person name="Kanematsu E."/>
            <person name="Gentles S."/>
            <person name="Christopoulos C.C."/>
            <person name="Choufani S."/>
            <person name="Kwasnicka D."/>
            <person name="Zheng X.H."/>
            <person name="Lai Z."/>
            <person name="Nusskern D.R."/>
            <person name="Zhang Q."/>
            <person name="Gu Z."/>
            <person name="Lu F."/>
            <person name="Zeesman S."/>
            <person name="Nowaczyk M.J."/>
            <person name="Teshima I."/>
            <person name="Chitayat D."/>
            <person name="Shuman C."/>
            <person name="Weksberg R."/>
            <person name="Zackai E.H."/>
            <person name="Grebe T.A."/>
            <person name="Cox S.R."/>
            <person name="Kirkpatrick S.J."/>
            <person name="Rahman N."/>
            <person name="Friedman J.M."/>
            <person name="Heng H.H.Q."/>
            <person name="Pelicci P.G."/>
            <person name="Lo-Coco F."/>
            <person name="Belloni E."/>
            <person name="Shaffer L.G."/>
            <person name="Pober B."/>
            <person name="Morton C.C."/>
            <person name="Gusella J.F."/>
            <person name="Bruns G.A.P."/>
            <person name="Korf B.R."/>
            <person name="Quade B.J."/>
            <person name="Ligon A.H."/>
            <person name="Ferguson H."/>
            <person name="Higgins A.W."/>
            <person name="Leach N.T."/>
            <person name="Herrick S.R."/>
            <person name="Lemyre E."/>
            <person name="Farra C.G."/>
            <person name="Kim H.-G."/>
            <person name="Summers A.M."/>
            <person name="Gripp K.W."/>
            <person name="Roberts W."/>
            <person name="Szatmari P."/>
            <person name="Winsor E.J.T."/>
            <person name="Grzeschik K.-H."/>
            <person name="Teebi A."/>
            <person name="Minassian B.A."/>
            <person name="Kere J."/>
            <person name="Armengol L."/>
            <person name="Pujana M.A."/>
            <person name="Estivill X."/>
            <person name="Wilson M.D."/>
            <person name="Koop B.F."/>
            <person name="Tosi S."/>
            <person name="Moore G.E."/>
            <person name="Boright A.P."/>
            <person name="Zlotorynski E."/>
            <person name="Kerem B."/>
            <person name="Kroisel P.M."/>
            <person name="Petek E."/>
            <person name="Oscier D.G."/>
            <person name="Mould S.J."/>
            <person name="Doehner H."/>
            <person name="Doehner K."/>
            <person name="Rommens J.M."/>
            <person name="Vincent J.B."/>
            <person name="Venter J.C."/>
            <person name="Li P.W."/>
            <person name="Mural R.J."/>
            <person name="Adams M.D."/>
            <person name="Tsui L.-C."/>
        </authorList>
    </citation>
    <scope>NUCLEOTIDE SEQUENCE [LARGE SCALE GENOMIC DNA]</scope>
</reference>
<reference key="7">
    <citation type="journal article" date="2004" name="Genome Res.">
        <title>The status, quality, and expansion of the NIH full-length cDNA project: the Mammalian Gene Collection (MGC).</title>
        <authorList>
            <consortium name="The MGC Project Team"/>
        </authorList>
    </citation>
    <scope>NUCLEOTIDE SEQUENCE [LARGE SCALE MRNA] (ISOFORMS 1 AND 2)</scope>
    <source>
        <tissue>Brain</tissue>
        <tissue>Lung</tissue>
        <tissue>Pancreas</tissue>
    </source>
</reference>
<reference key="8">
    <citation type="journal article" date="2002" name="J. Biol. Chem.">
        <title>Identification of novel SH3 domain ligands for the Src family kinase Hck. Wiskott-Aldrich syndrome protein (WASP), WASP-interacting protein (WIP), and ELMO1.</title>
        <authorList>
            <person name="Scott M.P."/>
            <person name="Zappacosta F."/>
            <person name="Kim E.Y."/>
            <person name="Annan R.S."/>
            <person name="Miller W.T."/>
        </authorList>
    </citation>
    <scope>PHOSPHORYLATION</scope>
</reference>
<reference key="9">
    <citation type="journal article" date="2002" name="Nat. Cell Biol.">
        <title>Unconventional Rac-GEF activity is mediated through the Dock180-ELMO complex.</title>
        <authorList>
            <person name="Brugnera E."/>
            <person name="Haney L."/>
            <person name="Grimsley C."/>
            <person name="Lu M."/>
            <person name="Walk S.F."/>
            <person name="Tosello-Trampont A.-C."/>
            <person name="Macara I.G."/>
            <person name="Madhani H."/>
            <person name="Fink G.R."/>
            <person name="Ravichandran K.S."/>
        </authorList>
    </citation>
    <scope>FUNCTION</scope>
    <scope>INTERACTION WITH DOCK1</scope>
    <scope>SUBUNIT OF A COMPLEX CONTAINING RAC1 AND DOCK1</scope>
</reference>
<reference key="10">
    <citation type="journal article" date="2005" name="Biochemistry">
        <title>Identification of tyrosine residues on ELMO1 that are phosphorylated by the Src-family kinase Hck.</title>
        <authorList>
            <person name="Yokoyama N."/>
            <person name="deBakker C.D."/>
            <person name="Zappacosta F."/>
            <person name="Huddleston M.J."/>
            <person name="Annan R.S."/>
            <person name="Ravichandran K.S."/>
            <person name="Miller W.T."/>
        </authorList>
    </citation>
    <scope>INTERACTION WITH HCK</scope>
    <scope>PHOSPHORYLATION AT TYR-18; TYR-216; TYR-395; TYR-511 AND TYR-720</scope>
</reference>
<reference key="11">
    <citation type="journal article" date="2007" name="Mol. Biol. Cell">
        <title>Interaction of ezrin with the novel guanine nucleotide exchange factor PLEKHG6 promotes RhoG-dependent apical cytoskeleton rearrangements in epithelial cells.</title>
        <authorList>
            <person name="D'Angelo R."/>
            <person name="Aresta S."/>
            <person name="Blangy A."/>
            <person name="Del Maestro L."/>
            <person name="Louvard D."/>
            <person name="Arpin M."/>
        </authorList>
    </citation>
    <scope>INTERACTION WITH PLEKHG6</scope>
</reference>
<reference key="12">
    <citation type="journal article" date="2009" name="Sci. Signal.">
        <title>Quantitative phosphoproteomic analysis of T cell receptor signaling reveals system-wide modulation of protein-protein interactions.</title>
        <authorList>
            <person name="Mayya V."/>
            <person name="Lundgren D.H."/>
            <person name="Hwang S.-I."/>
            <person name="Rezaul K."/>
            <person name="Wu L."/>
            <person name="Eng J.K."/>
            <person name="Rodionov V."/>
            <person name="Han D.K."/>
        </authorList>
    </citation>
    <scope>IDENTIFICATION BY MASS SPECTROMETRY [LARGE SCALE ANALYSIS]</scope>
    <source>
        <tissue>Leukemic T-cell</tissue>
    </source>
</reference>
<reference key="13">
    <citation type="journal article" date="2009" name="Science">
        <title>Lysine acetylation targets protein complexes and co-regulates major cellular functions.</title>
        <authorList>
            <person name="Choudhary C."/>
            <person name="Kumar C."/>
            <person name="Gnad F."/>
            <person name="Nielsen M.L."/>
            <person name="Rehman M."/>
            <person name="Walther T.C."/>
            <person name="Olsen J.V."/>
            <person name="Mann M."/>
        </authorList>
    </citation>
    <scope>ACETYLATION [LARGE SCALE ANALYSIS] AT LYS-100 AND LYS-105</scope>
    <scope>IDENTIFICATION BY MASS SPECTROMETRY [LARGE SCALE ANALYSIS]</scope>
</reference>
<reference key="14">
    <citation type="journal article" date="2011" name="BMC Syst. Biol.">
        <title>Initial characterization of the human central proteome.</title>
        <authorList>
            <person name="Burkard T.R."/>
            <person name="Planyavsky M."/>
            <person name="Kaupe I."/>
            <person name="Breitwieser F.P."/>
            <person name="Buerckstuemmer T."/>
            <person name="Bennett K.L."/>
            <person name="Superti-Furga G."/>
            <person name="Colinge J."/>
        </authorList>
    </citation>
    <scope>IDENTIFICATION BY MASS SPECTROMETRY [LARGE SCALE ANALYSIS]</scope>
</reference>
<reference key="15">
    <citation type="journal article" date="2014" name="J. Proteomics">
        <title>An enzyme assisted RP-RPLC approach for in-depth analysis of human liver phosphoproteome.</title>
        <authorList>
            <person name="Bian Y."/>
            <person name="Song C."/>
            <person name="Cheng K."/>
            <person name="Dong M."/>
            <person name="Wang F."/>
            <person name="Huang J."/>
            <person name="Sun D."/>
            <person name="Wang L."/>
            <person name="Ye M."/>
            <person name="Zou H."/>
        </authorList>
    </citation>
    <scope>IDENTIFICATION BY MASS SPECTROMETRY [LARGE SCALE ANALYSIS]</scope>
    <source>
        <tissue>Liver</tissue>
    </source>
</reference>
<reference key="16">
    <citation type="journal article" date="2014" name="Proc. Natl. Acad. Sci. U.S.A.">
        <title>G-protein coupled receptor BAI3 promotes myoblast fusion in vertebrates.</title>
        <authorList>
            <person name="Hamoud N."/>
            <person name="Tran V."/>
            <person name="Croteau L.P."/>
            <person name="Kania A."/>
            <person name="Cote J.F."/>
        </authorList>
    </citation>
    <scope>INTERACTION WITH ADGRB3</scope>
</reference>
<reference key="17">
    <citation type="journal article" date="2015" name="Proteomics">
        <title>N-terminome analysis of the human mitochondrial proteome.</title>
        <authorList>
            <person name="Vaca Jacome A.S."/>
            <person name="Rabilloud T."/>
            <person name="Schaeffer-Reiss C."/>
            <person name="Rompais M."/>
            <person name="Ayoub D."/>
            <person name="Lane L."/>
            <person name="Bairoch A."/>
            <person name="Van Dorsselaer A."/>
            <person name="Carapito C."/>
        </authorList>
    </citation>
    <scope>IDENTIFICATION BY MASS SPECTROMETRY [LARGE SCALE ANALYSIS]</scope>
</reference>
<reference key="18">
    <citation type="journal article" date="2010" name="Am. J. Hum. Genet.">
        <title>BMPER mutation in diaphanospondylodysostosis identified by ancestral autozygosity mapping and targeted high-throughput sequencing.</title>
        <authorList>
            <person name="Funari V.A."/>
            <person name="Krakow D."/>
            <person name="Nevarez L."/>
            <person name="Chen Z."/>
            <person name="Funari T.L."/>
            <person name="Vatanavicharn N."/>
            <person name="Wilcox W.R."/>
            <person name="Rimoin D.L."/>
            <person name="Nelson S.F."/>
            <person name="Cohn D.H."/>
        </authorList>
    </citation>
    <scope>VARIANT SER-362</scope>
</reference>
<accession>Q92556</accession>
<accession>A4D1X6</accession>
<accession>Q29R79</accession>
<accession>Q6ZTJ0</accession>
<accession>Q96PB0</accession>
<accession>Q9H0I1</accession>
<protein>
    <recommendedName>
        <fullName>Engulfment and cell motility protein 1</fullName>
    </recommendedName>
    <alternativeName>
        <fullName>Protein ced-12 homolog</fullName>
    </alternativeName>
</protein>